<keyword id="KW-0067">ATP-binding</keyword>
<keyword id="KW-0997">Cell inner membrane</keyword>
<keyword id="KW-1003">Cell membrane</keyword>
<keyword id="KW-0418">Kinase</keyword>
<keyword id="KW-0448">Lipopolysaccharide biosynthesis</keyword>
<keyword id="KW-0472">Membrane</keyword>
<keyword id="KW-0547">Nucleotide-binding</keyword>
<keyword id="KW-0808">Transferase</keyword>
<gene>
    <name evidence="1" type="primary">kdkA</name>
    <name type="ordered locus">CGSHiEE_01760</name>
</gene>
<protein>
    <recommendedName>
        <fullName evidence="1">3-deoxy-D-manno-octulosonic acid kinase</fullName>
        <shortName evidence="1">Kdo kinase</shortName>
        <ecNumber evidence="1">2.7.1.166</ecNumber>
    </recommendedName>
</protein>
<evidence type="ECO:0000255" key="1">
    <source>
        <dbReference type="HAMAP-Rule" id="MF_00521"/>
    </source>
</evidence>
<accession>A5UAM9</accession>
<name>KDKA_HAEIE</name>
<comment type="function">
    <text evidence="1">Catalyzes the ATP-dependent phosphorylation of the 3-deoxy-D-manno-octulosonic acid (Kdo) residue in Kdo-lipid IV(A) at the 4-OH position.</text>
</comment>
<comment type="catalytic activity">
    <reaction evidence="1">
        <text>an alpha-Kdo-(2-&gt;6)-lipid IVA + ATP = a 4-O-phospho-alpha-Kdo-(2-&gt;6)-lipid IVA + ADP + H(+)</text>
        <dbReference type="Rhea" id="RHEA:74271"/>
        <dbReference type="ChEBI" id="CHEBI:15378"/>
        <dbReference type="ChEBI" id="CHEBI:30616"/>
        <dbReference type="ChEBI" id="CHEBI:176428"/>
        <dbReference type="ChEBI" id="CHEBI:193140"/>
        <dbReference type="ChEBI" id="CHEBI:456216"/>
        <dbReference type="EC" id="2.7.1.166"/>
    </reaction>
</comment>
<comment type="pathway">
    <text evidence="1">Bacterial outer membrane biogenesis; LPS core biosynthesis.</text>
</comment>
<comment type="subcellular location">
    <subcellularLocation>
        <location evidence="1">Cell inner membrane</location>
        <topology evidence="1">Peripheral membrane protein</topology>
        <orientation evidence="1">Cytoplasmic side</orientation>
    </subcellularLocation>
</comment>
<comment type="similarity">
    <text evidence="1">Belongs to the protein kinase superfamily. KdkA/RfaP family.</text>
</comment>
<proteinExistence type="inferred from homology"/>
<feature type="chain" id="PRO_1000050915" description="3-deoxy-D-manno-octulosonic acid kinase">
    <location>
        <begin position="1"/>
        <end position="241"/>
    </location>
</feature>
<feature type="active site" evidence="1">
    <location>
        <position position="171"/>
    </location>
</feature>
<organism>
    <name type="scientific">Haemophilus influenzae (strain PittEE)</name>
    <dbReference type="NCBI Taxonomy" id="374930"/>
    <lineage>
        <taxon>Bacteria</taxon>
        <taxon>Pseudomonadati</taxon>
        <taxon>Pseudomonadota</taxon>
        <taxon>Gammaproteobacteria</taxon>
        <taxon>Pasteurellales</taxon>
        <taxon>Pasteurellaceae</taxon>
        <taxon>Haemophilus</taxon>
    </lineage>
</organism>
<dbReference type="EC" id="2.7.1.166" evidence="1"/>
<dbReference type="EMBL" id="CP000671">
    <property type="protein sequence ID" value="ABQ97830.1"/>
    <property type="molecule type" value="Genomic_DNA"/>
</dbReference>
<dbReference type="SMR" id="A5UAM9"/>
<dbReference type="KEGG" id="hip:CGSHiEE_01760"/>
<dbReference type="HOGENOM" id="CLU_094226_0_0_6"/>
<dbReference type="UniPathway" id="UPA00958"/>
<dbReference type="GO" id="GO:0005886">
    <property type="term" value="C:plasma membrane"/>
    <property type="evidence" value="ECO:0007669"/>
    <property type="project" value="UniProtKB-SubCell"/>
</dbReference>
<dbReference type="GO" id="GO:0005524">
    <property type="term" value="F:ATP binding"/>
    <property type="evidence" value="ECO:0007669"/>
    <property type="project" value="UniProtKB-UniRule"/>
</dbReference>
<dbReference type="GO" id="GO:0016301">
    <property type="term" value="F:kinase activity"/>
    <property type="evidence" value="ECO:0007669"/>
    <property type="project" value="UniProtKB-KW"/>
</dbReference>
<dbReference type="GO" id="GO:0016773">
    <property type="term" value="F:phosphotransferase activity, alcohol group as acceptor"/>
    <property type="evidence" value="ECO:0007669"/>
    <property type="project" value="UniProtKB-UniRule"/>
</dbReference>
<dbReference type="GO" id="GO:0009244">
    <property type="term" value="P:lipopolysaccharide core region biosynthetic process"/>
    <property type="evidence" value="ECO:0007669"/>
    <property type="project" value="UniProtKB-UniRule"/>
</dbReference>
<dbReference type="Gene3D" id="1.10.510.10">
    <property type="entry name" value="Transferase(Phosphotransferase) domain 1"/>
    <property type="match status" value="1"/>
</dbReference>
<dbReference type="HAMAP" id="MF_00521">
    <property type="entry name" value="KDO_kinase"/>
    <property type="match status" value="1"/>
</dbReference>
<dbReference type="InterPro" id="IPR022826">
    <property type="entry name" value="KDO_kinase"/>
</dbReference>
<dbReference type="InterPro" id="IPR011009">
    <property type="entry name" value="Kinase-like_dom_sf"/>
</dbReference>
<dbReference type="NCBIfam" id="NF002475">
    <property type="entry name" value="PRK01723.1"/>
    <property type="match status" value="1"/>
</dbReference>
<dbReference type="Pfam" id="PF06293">
    <property type="entry name" value="Kdo"/>
    <property type="match status" value="1"/>
</dbReference>
<dbReference type="SUPFAM" id="SSF56112">
    <property type="entry name" value="Protein kinase-like (PK-like)"/>
    <property type="match status" value="1"/>
</dbReference>
<sequence length="241" mass="28543">MQQFQQDNQYFIFNFDRTFEQATEFFQAEFWQKQERVIGSAKGRGTTYFLQTEDWFGVNCALRHYYRGGLWGKLNKDRYRFSALETTRSFAEFHLLQRLYEAGLPVPKPIAARIQKGKLGICYQADILTEKIENAQDLTALLQTQTLPKETWRQIGRLIRKLHDLQICHTDLNAHNILLQQAEQGQKCWLLDFDKCGEKSGDFWKVQNLNRLKRSFEKEVGRMNIQFTEQNWADLMAAYHQ</sequence>
<reference key="1">
    <citation type="journal article" date="2007" name="Genome Biol.">
        <title>Characterization and modeling of the Haemophilus influenzae core and supragenomes based on the complete genomic sequences of Rd and 12 clinical nontypeable strains.</title>
        <authorList>
            <person name="Hogg J.S."/>
            <person name="Hu F.Z."/>
            <person name="Janto B."/>
            <person name="Boissy R."/>
            <person name="Hayes J."/>
            <person name="Keefe R."/>
            <person name="Post J.C."/>
            <person name="Ehrlich G.D."/>
        </authorList>
    </citation>
    <scope>NUCLEOTIDE SEQUENCE [LARGE SCALE GENOMIC DNA]</scope>
    <source>
        <strain>PittEE</strain>
    </source>
</reference>